<sequence>MAAKDIRFGEDARTRMVRGVNVLANAVKATLGPKGRNVVLEKSFGAPTITKDGVSVAKEIELADKFENMGAQMVKEVASKTNDNAGDGTTTATVLAQALIREGAKAVAAGMNPMDLKRGIDQAVKAAVIELKNISKPTTDDKAIAQVGTISANSDESIGNIIAEAMQKVGKEGVITVEEGSGLENELDVVEGMQFDRGYLSPYFINNQQSQSADLDDPFILLHDKKISNVRDLLPVLEGVAKAGKPLLIVAEEVEGEALATLVVNTIRGIVKVVAVKAPGFGDRRKAMLEDMAVLTGGTVISEEVGLALEKATIKDLGRAKKVQVSKENTTIIDGAGDSATIEARVGQIKTQIEDTSSDYDREKLQERVAKLAGGVAVIKVGASTEIEMKEKKARVEDALHATRAAVEEGVVPGGGVALVRALVAVGNLTGANEDQTHGIQIALRAMEAPLREIVANAGEEPSVILNKVKEGTGNYGYNAANGEFGDMVEFGILDPTKVTRSALQNAASIAGLMITTEAMVADAPKKDEPAMPAGGGMGGMGGMDF</sequence>
<comment type="function">
    <text evidence="1">Together with its co-chaperonin GroES, plays an essential role in assisting protein folding. The GroEL-GroES system forms a nano-cage that allows encapsulation of the non-native substrate proteins and provides a physical environment optimized to promote and accelerate protein folding.</text>
</comment>
<comment type="catalytic activity">
    <reaction evidence="1">
        <text>ATP + H2O + a folded polypeptide = ADP + phosphate + an unfolded polypeptide.</text>
        <dbReference type="EC" id="5.6.1.7"/>
    </reaction>
</comment>
<comment type="subunit">
    <text evidence="1">Forms a cylinder of 14 subunits composed of two heptameric rings stacked back-to-back. Interacts with the co-chaperonin GroES.</text>
</comment>
<comment type="subcellular location">
    <subcellularLocation>
        <location evidence="1">Cytoplasm</location>
    </subcellularLocation>
</comment>
<comment type="similarity">
    <text evidence="1">Belongs to the chaperonin (HSP60) family.</text>
</comment>
<proteinExistence type="inferred from homology"/>
<feature type="chain" id="PRO_0000063607" description="Chaperonin GroEL">
    <location>
        <begin position="1"/>
        <end position="546"/>
    </location>
</feature>
<feature type="region of interest" description="Disordered" evidence="2">
    <location>
        <begin position="526"/>
        <end position="546"/>
    </location>
</feature>
<feature type="compositionally biased region" description="Gly residues" evidence="2">
    <location>
        <begin position="534"/>
        <end position="546"/>
    </location>
</feature>
<feature type="binding site" evidence="1">
    <location>
        <begin position="30"/>
        <end position="33"/>
    </location>
    <ligand>
        <name>ATP</name>
        <dbReference type="ChEBI" id="CHEBI:30616"/>
    </ligand>
</feature>
<feature type="binding site" evidence="1">
    <location>
        <position position="51"/>
    </location>
    <ligand>
        <name>ATP</name>
        <dbReference type="ChEBI" id="CHEBI:30616"/>
    </ligand>
</feature>
<feature type="binding site" evidence="1">
    <location>
        <begin position="87"/>
        <end position="91"/>
    </location>
    <ligand>
        <name>ATP</name>
        <dbReference type="ChEBI" id="CHEBI:30616"/>
    </ligand>
</feature>
<feature type="binding site" evidence="1">
    <location>
        <position position="415"/>
    </location>
    <ligand>
        <name>ATP</name>
        <dbReference type="ChEBI" id="CHEBI:30616"/>
    </ligand>
</feature>
<feature type="binding site" evidence="1">
    <location>
        <begin position="479"/>
        <end position="481"/>
    </location>
    <ligand>
        <name>ATP</name>
        <dbReference type="ChEBI" id="CHEBI:30616"/>
    </ligand>
</feature>
<feature type="binding site" evidence="1">
    <location>
        <position position="495"/>
    </location>
    <ligand>
        <name>ATP</name>
        <dbReference type="ChEBI" id="CHEBI:30616"/>
    </ligand>
</feature>
<gene>
    <name evidence="1" type="primary">groEL</name>
    <name evidence="1" type="synonym">groL</name>
    <name type="ordered locus">XCC0523</name>
</gene>
<organism>
    <name type="scientific">Xanthomonas campestris pv. campestris (strain ATCC 33913 / DSM 3586 / NCPPB 528 / LMG 568 / P 25)</name>
    <dbReference type="NCBI Taxonomy" id="190485"/>
    <lineage>
        <taxon>Bacteria</taxon>
        <taxon>Pseudomonadati</taxon>
        <taxon>Pseudomonadota</taxon>
        <taxon>Gammaproteobacteria</taxon>
        <taxon>Lysobacterales</taxon>
        <taxon>Lysobacteraceae</taxon>
        <taxon>Xanthomonas</taxon>
    </lineage>
</organism>
<dbReference type="EC" id="5.6.1.7" evidence="1"/>
<dbReference type="EMBL" id="AE008922">
    <property type="protein sequence ID" value="AAM39839.1"/>
    <property type="molecule type" value="Genomic_DNA"/>
</dbReference>
<dbReference type="RefSeq" id="NP_635915.1">
    <property type="nucleotide sequence ID" value="NC_003902.1"/>
</dbReference>
<dbReference type="RefSeq" id="WP_011035771.1">
    <property type="nucleotide sequence ID" value="NC_003902.1"/>
</dbReference>
<dbReference type="SMR" id="Q8PD23"/>
<dbReference type="STRING" id="190485.XCC0523"/>
<dbReference type="EnsemblBacteria" id="AAM39839">
    <property type="protein sequence ID" value="AAM39839"/>
    <property type="gene ID" value="XCC0523"/>
</dbReference>
<dbReference type="GeneID" id="79387880"/>
<dbReference type="KEGG" id="xcc:XCC0523"/>
<dbReference type="PATRIC" id="fig|190485.4.peg.576"/>
<dbReference type="eggNOG" id="COG0459">
    <property type="taxonomic scope" value="Bacteria"/>
</dbReference>
<dbReference type="HOGENOM" id="CLU_016503_3_0_6"/>
<dbReference type="OrthoDB" id="9766614at2"/>
<dbReference type="Proteomes" id="UP000001010">
    <property type="component" value="Chromosome"/>
</dbReference>
<dbReference type="GO" id="GO:1990220">
    <property type="term" value="C:GroEL-GroES complex"/>
    <property type="evidence" value="ECO:0000318"/>
    <property type="project" value="GO_Central"/>
</dbReference>
<dbReference type="GO" id="GO:0005524">
    <property type="term" value="F:ATP binding"/>
    <property type="evidence" value="ECO:0000318"/>
    <property type="project" value="GO_Central"/>
</dbReference>
<dbReference type="GO" id="GO:0140662">
    <property type="term" value="F:ATP-dependent protein folding chaperone"/>
    <property type="evidence" value="ECO:0007669"/>
    <property type="project" value="InterPro"/>
</dbReference>
<dbReference type="GO" id="GO:0016853">
    <property type="term" value="F:isomerase activity"/>
    <property type="evidence" value="ECO:0007669"/>
    <property type="project" value="UniProtKB-KW"/>
</dbReference>
<dbReference type="GO" id="GO:0051082">
    <property type="term" value="F:unfolded protein binding"/>
    <property type="evidence" value="ECO:0000318"/>
    <property type="project" value="GO_Central"/>
</dbReference>
<dbReference type="GO" id="GO:0051085">
    <property type="term" value="P:chaperone cofactor-dependent protein refolding"/>
    <property type="evidence" value="ECO:0000318"/>
    <property type="project" value="GO_Central"/>
</dbReference>
<dbReference type="GO" id="GO:0042026">
    <property type="term" value="P:protein refolding"/>
    <property type="evidence" value="ECO:0007669"/>
    <property type="project" value="UniProtKB-UniRule"/>
</dbReference>
<dbReference type="GO" id="GO:0009408">
    <property type="term" value="P:response to heat"/>
    <property type="evidence" value="ECO:0000318"/>
    <property type="project" value="GO_Central"/>
</dbReference>
<dbReference type="CDD" id="cd03344">
    <property type="entry name" value="GroEL"/>
    <property type="match status" value="1"/>
</dbReference>
<dbReference type="FunFam" id="1.10.560.10:FF:000001">
    <property type="entry name" value="60 kDa chaperonin"/>
    <property type="match status" value="1"/>
</dbReference>
<dbReference type="FunFam" id="3.50.7.10:FF:000001">
    <property type="entry name" value="60 kDa chaperonin"/>
    <property type="match status" value="1"/>
</dbReference>
<dbReference type="Gene3D" id="3.50.7.10">
    <property type="entry name" value="GroEL"/>
    <property type="match status" value="1"/>
</dbReference>
<dbReference type="Gene3D" id="1.10.560.10">
    <property type="entry name" value="GroEL-like equatorial domain"/>
    <property type="match status" value="1"/>
</dbReference>
<dbReference type="Gene3D" id="3.30.260.10">
    <property type="entry name" value="TCP-1-like chaperonin intermediate domain"/>
    <property type="match status" value="1"/>
</dbReference>
<dbReference type="HAMAP" id="MF_00600">
    <property type="entry name" value="CH60"/>
    <property type="match status" value="1"/>
</dbReference>
<dbReference type="InterPro" id="IPR018370">
    <property type="entry name" value="Chaperonin_Cpn60_CS"/>
</dbReference>
<dbReference type="InterPro" id="IPR001844">
    <property type="entry name" value="Cpn60/GroEL"/>
</dbReference>
<dbReference type="InterPro" id="IPR002423">
    <property type="entry name" value="Cpn60/GroEL/TCP-1"/>
</dbReference>
<dbReference type="InterPro" id="IPR027409">
    <property type="entry name" value="GroEL-like_apical_dom_sf"/>
</dbReference>
<dbReference type="InterPro" id="IPR027413">
    <property type="entry name" value="GROEL-like_equatorial_sf"/>
</dbReference>
<dbReference type="InterPro" id="IPR027410">
    <property type="entry name" value="TCP-1-like_intermed_sf"/>
</dbReference>
<dbReference type="NCBIfam" id="TIGR02348">
    <property type="entry name" value="GroEL"/>
    <property type="match status" value="1"/>
</dbReference>
<dbReference type="NCBIfam" id="NF000592">
    <property type="entry name" value="PRK00013.1"/>
    <property type="match status" value="1"/>
</dbReference>
<dbReference type="NCBIfam" id="NF009487">
    <property type="entry name" value="PRK12849.1"/>
    <property type="match status" value="1"/>
</dbReference>
<dbReference type="NCBIfam" id="NF009488">
    <property type="entry name" value="PRK12850.1"/>
    <property type="match status" value="1"/>
</dbReference>
<dbReference type="NCBIfam" id="NF009489">
    <property type="entry name" value="PRK12851.1"/>
    <property type="match status" value="1"/>
</dbReference>
<dbReference type="PANTHER" id="PTHR45633">
    <property type="entry name" value="60 KDA HEAT SHOCK PROTEIN, MITOCHONDRIAL"/>
    <property type="match status" value="1"/>
</dbReference>
<dbReference type="Pfam" id="PF00118">
    <property type="entry name" value="Cpn60_TCP1"/>
    <property type="match status" value="1"/>
</dbReference>
<dbReference type="PRINTS" id="PR00298">
    <property type="entry name" value="CHAPERONIN60"/>
</dbReference>
<dbReference type="SUPFAM" id="SSF52029">
    <property type="entry name" value="GroEL apical domain-like"/>
    <property type="match status" value="1"/>
</dbReference>
<dbReference type="SUPFAM" id="SSF48592">
    <property type="entry name" value="GroEL equatorial domain-like"/>
    <property type="match status" value="1"/>
</dbReference>
<dbReference type="SUPFAM" id="SSF54849">
    <property type="entry name" value="GroEL-intermediate domain like"/>
    <property type="match status" value="1"/>
</dbReference>
<dbReference type="PROSITE" id="PS00296">
    <property type="entry name" value="CHAPERONINS_CPN60"/>
    <property type="match status" value="1"/>
</dbReference>
<evidence type="ECO:0000255" key="1">
    <source>
        <dbReference type="HAMAP-Rule" id="MF_00600"/>
    </source>
</evidence>
<evidence type="ECO:0000256" key="2">
    <source>
        <dbReference type="SAM" id="MobiDB-lite"/>
    </source>
</evidence>
<keyword id="KW-0067">ATP-binding</keyword>
<keyword id="KW-0143">Chaperone</keyword>
<keyword id="KW-0963">Cytoplasm</keyword>
<keyword id="KW-0413">Isomerase</keyword>
<keyword id="KW-0547">Nucleotide-binding</keyword>
<keyword id="KW-1185">Reference proteome</keyword>
<accession>Q8PD23</accession>
<reference key="1">
    <citation type="journal article" date="2002" name="Nature">
        <title>Comparison of the genomes of two Xanthomonas pathogens with differing host specificities.</title>
        <authorList>
            <person name="da Silva A.C.R."/>
            <person name="Ferro J.A."/>
            <person name="Reinach F.C."/>
            <person name="Farah C.S."/>
            <person name="Furlan L.R."/>
            <person name="Quaggio R.B."/>
            <person name="Monteiro-Vitorello C.B."/>
            <person name="Van Sluys M.A."/>
            <person name="Almeida N.F. Jr."/>
            <person name="Alves L.M.C."/>
            <person name="do Amaral A.M."/>
            <person name="Bertolini M.C."/>
            <person name="Camargo L.E.A."/>
            <person name="Camarotte G."/>
            <person name="Cannavan F."/>
            <person name="Cardozo J."/>
            <person name="Chambergo F."/>
            <person name="Ciapina L.P."/>
            <person name="Cicarelli R.M.B."/>
            <person name="Coutinho L.L."/>
            <person name="Cursino-Santos J.R."/>
            <person name="El-Dorry H."/>
            <person name="Faria J.B."/>
            <person name="Ferreira A.J.S."/>
            <person name="Ferreira R.C.C."/>
            <person name="Ferro M.I.T."/>
            <person name="Formighieri E.F."/>
            <person name="Franco M.C."/>
            <person name="Greggio C.C."/>
            <person name="Gruber A."/>
            <person name="Katsuyama A.M."/>
            <person name="Kishi L.T."/>
            <person name="Leite R.P."/>
            <person name="Lemos E.G.M."/>
            <person name="Lemos M.V.F."/>
            <person name="Locali E.C."/>
            <person name="Machado M.A."/>
            <person name="Madeira A.M.B.N."/>
            <person name="Martinez-Rossi N.M."/>
            <person name="Martins E.C."/>
            <person name="Meidanis J."/>
            <person name="Menck C.F.M."/>
            <person name="Miyaki C.Y."/>
            <person name="Moon D.H."/>
            <person name="Moreira L.M."/>
            <person name="Novo M.T.M."/>
            <person name="Okura V.K."/>
            <person name="Oliveira M.C."/>
            <person name="Oliveira V.R."/>
            <person name="Pereira H.A."/>
            <person name="Rossi A."/>
            <person name="Sena J.A.D."/>
            <person name="Silva C."/>
            <person name="de Souza R.F."/>
            <person name="Spinola L.A.F."/>
            <person name="Takita M.A."/>
            <person name="Tamura R.E."/>
            <person name="Teixeira E.C."/>
            <person name="Tezza R.I.D."/>
            <person name="Trindade dos Santos M."/>
            <person name="Truffi D."/>
            <person name="Tsai S.M."/>
            <person name="White F.F."/>
            <person name="Setubal J.C."/>
            <person name="Kitajima J.P."/>
        </authorList>
    </citation>
    <scope>NUCLEOTIDE SEQUENCE [LARGE SCALE GENOMIC DNA]</scope>
    <source>
        <strain>ATCC 33913 / DSM 3586 / NCPPB 528 / LMG 568 / P 25</strain>
    </source>
</reference>
<protein>
    <recommendedName>
        <fullName evidence="1">Chaperonin GroEL</fullName>
        <ecNumber evidence="1">5.6.1.7</ecNumber>
    </recommendedName>
    <alternativeName>
        <fullName evidence="1">60 kDa chaperonin</fullName>
    </alternativeName>
    <alternativeName>
        <fullName evidence="1">Chaperonin-60</fullName>
        <shortName evidence="1">Cpn60</shortName>
    </alternativeName>
</protein>
<name>CH60_XANCP</name>